<comment type="function">
    <text evidence="1">Transfers the 4'-phosphopantetheine moiety from coenzyme A to a Ser of acyl-carrier-protein.</text>
</comment>
<comment type="catalytic activity">
    <reaction evidence="1">
        <text>apo-[ACP] + CoA = holo-[ACP] + adenosine 3',5'-bisphosphate + H(+)</text>
        <dbReference type="Rhea" id="RHEA:12068"/>
        <dbReference type="Rhea" id="RHEA-COMP:9685"/>
        <dbReference type="Rhea" id="RHEA-COMP:9690"/>
        <dbReference type="ChEBI" id="CHEBI:15378"/>
        <dbReference type="ChEBI" id="CHEBI:29999"/>
        <dbReference type="ChEBI" id="CHEBI:57287"/>
        <dbReference type="ChEBI" id="CHEBI:58343"/>
        <dbReference type="ChEBI" id="CHEBI:64479"/>
        <dbReference type="EC" id="2.7.8.7"/>
    </reaction>
</comment>
<comment type="cofactor">
    <cofactor evidence="1">
        <name>Mg(2+)</name>
        <dbReference type="ChEBI" id="CHEBI:18420"/>
    </cofactor>
</comment>
<comment type="subcellular location">
    <subcellularLocation>
        <location evidence="1">Cytoplasm</location>
    </subcellularLocation>
</comment>
<comment type="similarity">
    <text evidence="1">Belongs to the P-Pant transferase superfamily. AcpS family.</text>
</comment>
<organism>
    <name type="scientific">Alkalilimnicola ehrlichii (strain ATCC BAA-1101 / DSM 17681 / MLHE-1)</name>
    <dbReference type="NCBI Taxonomy" id="187272"/>
    <lineage>
        <taxon>Bacteria</taxon>
        <taxon>Pseudomonadati</taxon>
        <taxon>Pseudomonadota</taxon>
        <taxon>Gammaproteobacteria</taxon>
        <taxon>Chromatiales</taxon>
        <taxon>Ectothiorhodospiraceae</taxon>
        <taxon>Alkalilimnicola</taxon>
    </lineage>
</organism>
<gene>
    <name evidence="1" type="primary">acpS</name>
    <name type="ordered locus">Mlg_1351</name>
</gene>
<dbReference type="EC" id="2.7.8.7" evidence="1"/>
<dbReference type="EMBL" id="CP000453">
    <property type="protein sequence ID" value="ABI56700.1"/>
    <property type="molecule type" value="Genomic_DNA"/>
</dbReference>
<dbReference type="RefSeq" id="WP_011629095.1">
    <property type="nucleotide sequence ID" value="NC_008340.1"/>
</dbReference>
<dbReference type="SMR" id="Q0A8Y7"/>
<dbReference type="KEGG" id="aeh:Mlg_1351"/>
<dbReference type="eggNOG" id="COG0736">
    <property type="taxonomic scope" value="Bacteria"/>
</dbReference>
<dbReference type="HOGENOM" id="CLU_089696_3_1_6"/>
<dbReference type="OrthoDB" id="517356at2"/>
<dbReference type="Proteomes" id="UP000001962">
    <property type="component" value="Chromosome"/>
</dbReference>
<dbReference type="GO" id="GO:0005737">
    <property type="term" value="C:cytoplasm"/>
    <property type="evidence" value="ECO:0007669"/>
    <property type="project" value="UniProtKB-SubCell"/>
</dbReference>
<dbReference type="GO" id="GO:0008897">
    <property type="term" value="F:holo-[acyl-carrier-protein] synthase activity"/>
    <property type="evidence" value="ECO:0007669"/>
    <property type="project" value="UniProtKB-UniRule"/>
</dbReference>
<dbReference type="GO" id="GO:0000287">
    <property type="term" value="F:magnesium ion binding"/>
    <property type="evidence" value="ECO:0007669"/>
    <property type="project" value="UniProtKB-UniRule"/>
</dbReference>
<dbReference type="GO" id="GO:0006633">
    <property type="term" value="P:fatty acid biosynthetic process"/>
    <property type="evidence" value="ECO:0007669"/>
    <property type="project" value="UniProtKB-UniRule"/>
</dbReference>
<dbReference type="FunFam" id="3.90.470.20:FF:000001">
    <property type="entry name" value="Holo-[acyl-carrier-protein] synthase"/>
    <property type="match status" value="1"/>
</dbReference>
<dbReference type="Gene3D" id="3.90.470.20">
    <property type="entry name" value="4'-phosphopantetheinyl transferase domain"/>
    <property type="match status" value="1"/>
</dbReference>
<dbReference type="HAMAP" id="MF_00101">
    <property type="entry name" value="AcpS"/>
    <property type="match status" value="1"/>
</dbReference>
<dbReference type="InterPro" id="IPR008278">
    <property type="entry name" value="4-PPantetheinyl_Trfase_dom"/>
</dbReference>
<dbReference type="InterPro" id="IPR037143">
    <property type="entry name" value="4-PPantetheinyl_Trfase_dom_sf"/>
</dbReference>
<dbReference type="InterPro" id="IPR002582">
    <property type="entry name" value="ACPS"/>
</dbReference>
<dbReference type="InterPro" id="IPR004568">
    <property type="entry name" value="Ppantetheine-prot_Trfase_dom"/>
</dbReference>
<dbReference type="NCBIfam" id="TIGR00516">
    <property type="entry name" value="acpS"/>
    <property type="match status" value="1"/>
</dbReference>
<dbReference type="NCBIfam" id="TIGR00556">
    <property type="entry name" value="pantethn_trn"/>
    <property type="match status" value="1"/>
</dbReference>
<dbReference type="Pfam" id="PF01648">
    <property type="entry name" value="ACPS"/>
    <property type="match status" value="1"/>
</dbReference>
<dbReference type="SUPFAM" id="SSF56214">
    <property type="entry name" value="4'-phosphopantetheinyl transferase"/>
    <property type="match status" value="1"/>
</dbReference>
<keyword id="KW-0963">Cytoplasm</keyword>
<keyword id="KW-0275">Fatty acid biosynthesis</keyword>
<keyword id="KW-0276">Fatty acid metabolism</keyword>
<keyword id="KW-0444">Lipid biosynthesis</keyword>
<keyword id="KW-0443">Lipid metabolism</keyword>
<keyword id="KW-0460">Magnesium</keyword>
<keyword id="KW-0479">Metal-binding</keyword>
<keyword id="KW-1185">Reference proteome</keyword>
<keyword id="KW-0808">Transferase</keyword>
<accession>Q0A8Y7</accession>
<protein>
    <recommendedName>
        <fullName evidence="1">Holo-[acyl-carrier-protein] synthase</fullName>
        <shortName evidence="1">Holo-ACP synthase</shortName>
        <ecNumber evidence="1">2.7.8.7</ecNumber>
    </recommendedName>
    <alternativeName>
        <fullName evidence="1">4'-phosphopantetheinyl transferase AcpS</fullName>
    </alternativeName>
</protein>
<name>ACPS_ALKEH</name>
<reference key="1">
    <citation type="submission" date="2006-08" db="EMBL/GenBank/DDBJ databases">
        <title>Complete sequence of Alkalilimnicola ehrilichei MLHE-1.</title>
        <authorList>
            <person name="Copeland A."/>
            <person name="Lucas S."/>
            <person name="Lapidus A."/>
            <person name="Barry K."/>
            <person name="Detter J.C."/>
            <person name="Glavina del Rio T."/>
            <person name="Hammon N."/>
            <person name="Israni S."/>
            <person name="Dalin E."/>
            <person name="Tice H."/>
            <person name="Pitluck S."/>
            <person name="Sims D."/>
            <person name="Brettin T."/>
            <person name="Bruce D."/>
            <person name="Han C."/>
            <person name="Tapia R."/>
            <person name="Gilna P."/>
            <person name="Schmutz J."/>
            <person name="Larimer F."/>
            <person name="Land M."/>
            <person name="Hauser L."/>
            <person name="Kyrpides N."/>
            <person name="Mikhailova N."/>
            <person name="Oremland R.S."/>
            <person name="Hoeft S.E."/>
            <person name="Switzer-Blum J."/>
            <person name="Kulp T."/>
            <person name="King G."/>
            <person name="Tabita R."/>
            <person name="Witte B."/>
            <person name="Santini J.M."/>
            <person name="Basu P."/>
            <person name="Hollibaugh J.T."/>
            <person name="Xie G."/>
            <person name="Stolz J.F."/>
            <person name="Richardson P."/>
        </authorList>
    </citation>
    <scope>NUCLEOTIDE SEQUENCE [LARGE SCALE GENOMIC DNA]</scope>
    <source>
        <strain>ATCC BAA-1101 / DSM 17681 / MLHE-1</strain>
    </source>
</reference>
<evidence type="ECO:0000255" key="1">
    <source>
        <dbReference type="HAMAP-Rule" id="MF_00101"/>
    </source>
</evidence>
<proteinExistence type="inferred from homology"/>
<feature type="chain" id="PRO_1000008378" description="Holo-[acyl-carrier-protein] synthase">
    <location>
        <begin position="1"/>
        <end position="128"/>
    </location>
</feature>
<feature type="binding site" evidence="1">
    <location>
        <position position="8"/>
    </location>
    <ligand>
        <name>Mg(2+)</name>
        <dbReference type="ChEBI" id="CHEBI:18420"/>
    </ligand>
</feature>
<feature type="binding site" evidence="1">
    <location>
        <position position="58"/>
    </location>
    <ligand>
        <name>Mg(2+)</name>
        <dbReference type="ChEBI" id="CHEBI:18420"/>
    </ligand>
</feature>
<sequence>MIVGLGTDLVEIARMERLLARHGDRALTRLLHVQERAECPRAPDRAARFLARRFAAKEAAAKALGTGIANGIRFADLQVSHDDRGRPLLNLHGEARQHAQALGATGHHLSISDEQTHALAFVVLESSD</sequence>